<reference key="1">
    <citation type="submission" date="2005-03" db="EMBL/GenBank/DDBJ databases">
        <title>Brevibacillus brevis strain 47, complete genome.</title>
        <authorList>
            <person name="Hosoyama A."/>
            <person name="Yamada R."/>
            <person name="Hongo Y."/>
            <person name="Terui Y."/>
            <person name="Ankai A."/>
            <person name="Masuyama W."/>
            <person name="Sekiguchi M."/>
            <person name="Takeda T."/>
            <person name="Asano K."/>
            <person name="Ohji S."/>
            <person name="Ichikawa N."/>
            <person name="Narita S."/>
            <person name="Aoki N."/>
            <person name="Miura H."/>
            <person name="Matsushita S."/>
            <person name="Sekigawa T."/>
            <person name="Yamagata H."/>
            <person name="Yoshikawa H."/>
            <person name="Udaka S."/>
            <person name="Tanikawa S."/>
            <person name="Fujita N."/>
        </authorList>
    </citation>
    <scope>NUCLEOTIDE SEQUENCE [LARGE SCALE GENOMIC DNA]</scope>
    <source>
        <strain>47 / JCM 6285 / NBRC 100599</strain>
    </source>
</reference>
<sequence>MHRSHRLKKNEQFQAVFQRGSSAANKQFVLYSAKQEGQAAFRAGISVSKKIGNAVVRNRVKRLIREAVARMESDIPVGLDLVIIARPGVEAMTLEAIEQSLLHVMKRAKVIKQAPVHNGKRDGKRG</sequence>
<keyword id="KW-0255">Endonuclease</keyword>
<keyword id="KW-0378">Hydrolase</keyword>
<keyword id="KW-0540">Nuclease</keyword>
<keyword id="KW-1185">Reference proteome</keyword>
<keyword id="KW-0694">RNA-binding</keyword>
<keyword id="KW-0819">tRNA processing</keyword>
<feature type="chain" id="PRO_1000194617" description="Ribonuclease P protein component">
    <location>
        <begin position="1"/>
        <end position="126"/>
    </location>
</feature>
<name>RNPA_BREBN</name>
<proteinExistence type="inferred from homology"/>
<accession>C0ZA70</accession>
<comment type="function">
    <text evidence="1">RNaseP catalyzes the removal of the 5'-leader sequence from pre-tRNA to produce the mature 5'-terminus. It can also cleave other RNA substrates such as 4.5S RNA. The protein component plays an auxiliary but essential role in vivo by binding to the 5'-leader sequence and broadening the substrate specificity of the ribozyme.</text>
</comment>
<comment type="catalytic activity">
    <reaction evidence="1">
        <text>Endonucleolytic cleavage of RNA, removing 5'-extranucleotides from tRNA precursor.</text>
        <dbReference type="EC" id="3.1.26.5"/>
    </reaction>
</comment>
<comment type="subunit">
    <text evidence="1">Consists of a catalytic RNA component (M1 or rnpB) and a protein subunit.</text>
</comment>
<comment type="similarity">
    <text evidence="1">Belongs to the RnpA family.</text>
</comment>
<dbReference type="EC" id="3.1.26.5" evidence="1"/>
<dbReference type="EMBL" id="AP008955">
    <property type="protein sequence ID" value="BAH46924.1"/>
    <property type="molecule type" value="Genomic_DNA"/>
</dbReference>
<dbReference type="RefSeq" id="WP_015894104.1">
    <property type="nucleotide sequence ID" value="NC_012491.1"/>
</dbReference>
<dbReference type="SMR" id="C0ZA70"/>
<dbReference type="STRING" id="358681.BBR47_59470"/>
<dbReference type="GeneID" id="87586032"/>
<dbReference type="KEGG" id="bbe:BBR47_59470"/>
<dbReference type="eggNOG" id="COG0594">
    <property type="taxonomic scope" value="Bacteria"/>
</dbReference>
<dbReference type="HOGENOM" id="CLU_117179_9_1_9"/>
<dbReference type="Proteomes" id="UP000001877">
    <property type="component" value="Chromosome"/>
</dbReference>
<dbReference type="GO" id="GO:0030677">
    <property type="term" value="C:ribonuclease P complex"/>
    <property type="evidence" value="ECO:0007669"/>
    <property type="project" value="TreeGrafter"/>
</dbReference>
<dbReference type="GO" id="GO:0042781">
    <property type="term" value="F:3'-tRNA processing endoribonuclease activity"/>
    <property type="evidence" value="ECO:0007669"/>
    <property type="project" value="TreeGrafter"/>
</dbReference>
<dbReference type="GO" id="GO:0004526">
    <property type="term" value="F:ribonuclease P activity"/>
    <property type="evidence" value="ECO:0007669"/>
    <property type="project" value="UniProtKB-UniRule"/>
</dbReference>
<dbReference type="GO" id="GO:0000049">
    <property type="term" value="F:tRNA binding"/>
    <property type="evidence" value="ECO:0007669"/>
    <property type="project" value="UniProtKB-UniRule"/>
</dbReference>
<dbReference type="GO" id="GO:0001682">
    <property type="term" value="P:tRNA 5'-leader removal"/>
    <property type="evidence" value="ECO:0007669"/>
    <property type="project" value="UniProtKB-UniRule"/>
</dbReference>
<dbReference type="FunFam" id="3.30.230.10:FF:000021">
    <property type="entry name" value="Ribonuclease P protein component"/>
    <property type="match status" value="1"/>
</dbReference>
<dbReference type="Gene3D" id="3.30.230.10">
    <property type="match status" value="1"/>
</dbReference>
<dbReference type="HAMAP" id="MF_00227">
    <property type="entry name" value="RNase_P"/>
    <property type="match status" value="1"/>
</dbReference>
<dbReference type="InterPro" id="IPR020568">
    <property type="entry name" value="Ribosomal_Su5_D2-typ_SF"/>
</dbReference>
<dbReference type="InterPro" id="IPR014721">
    <property type="entry name" value="Ribsml_uS5_D2-typ_fold_subgr"/>
</dbReference>
<dbReference type="InterPro" id="IPR000100">
    <property type="entry name" value="RNase_P"/>
</dbReference>
<dbReference type="InterPro" id="IPR020539">
    <property type="entry name" value="RNase_P_CS"/>
</dbReference>
<dbReference type="NCBIfam" id="TIGR00188">
    <property type="entry name" value="rnpA"/>
    <property type="match status" value="1"/>
</dbReference>
<dbReference type="PANTHER" id="PTHR33992">
    <property type="entry name" value="RIBONUCLEASE P PROTEIN COMPONENT"/>
    <property type="match status" value="1"/>
</dbReference>
<dbReference type="PANTHER" id="PTHR33992:SF1">
    <property type="entry name" value="RIBONUCLEASE P PROTEIN COMPONENT"/>
    <property type="match status" value="1"/>
</dbReference>
<dbReference type="Pfam" id="PF00825">
    <property type="entry name" value="Ribonuclease_P"/>
    <property type="match status" value="1"/>
</dbReference>
<dbReference type="SUPFAM" id="SSF54211">
    <property type="entry name" value="Ribosomal protein S5 domain 2-like"/>
    <property type="match status" value="1"/>
</dbReference>
<dbReference type="PROSITE" id="PS00648">
    <property type="entry name" value="RIBONUCLEASE_P"/>
    <property type="match status" value="1"/>
</dbReference>
<protein>
    <recommendedName>
        <fullName evidence="1">Ribonuclease P protein component</fullName>
        <shortName evidence="1">RNase P protein</shortName>
        <shortName evidence="1">RNaseP protein</shortName>
        <ecNumber evidence="1">3.1.26.5</ecNumber>
    </recommendedName>
    <alternativeName>
        <fullName evidence="1">Protein C5</fullName>
    </alternativeName>
</protein>
<organism>
    <name type="scientific">Brevibacillus brevis (strain 47 / JCM 6285 / NBRC 100599)</name>
    <dbReference type="NCBI Taxonomy" id="358681"/>
    <lineage>
        <taxon>Bacteria</taxon>
        <taxon>Bacillati</taxon>
        <taxon>Bacillota</taxon>
        <taxon>Bacilli</taxon>
        <taxon>Bacillales</taxon>
        <taxon>Paenibacillaceae</taxon>
        <taxon>Brevibacillus</taxon>
    </lineage>
</organism>
<gene>
    <name evidence="1" type="primary">rnpA</name>
    <name type="ordered locus">BBR47_59470</name>
</gene>
<evidence type="ECO:0000255" key="1">
    <source>
        <dbReference type="HAMAP-Rule" id="MF_00227"/>
    </source>
</evidence>